<name>FDFT_MYCMD</name>
<gene>
    <name type="primary">ERG9</name>
    <name type="ORF">UMAG_04374</name>
</gene>
<reference key="1">
    <citation type="submission" date="1996-09" db="EMBL/GenBank/DDBJ databases">
        <title>Squalene synthase in plant pathogenic fungi.</title>
        <authorList>
            <person name="Corran A.J."/>
        </authorList>
    </citation>
    <scope>NUCLEOTIDE SEQUENCE [GENOMIC DNA]</scope>
    <source>
        <strain>IMI 103761</strain>
    </source>
</reference>
<reference key="2">
    <citation type="journal article" date="2006" name="Nature">
        <title>Insights from the genome of the biotrophic fungal plant pathogen Ustilago maydis.</title>
        <authorList>
            <person name="Kaemper J."/>
            <person name="Kahmann R."/>
            <person name="Boelker M."/>
            <person name="Ma L.-J."/>
            <person name="Brefort T."/>
            <person name="Saville B.J."/>
            <person name="Banuett F."/>
            <person name="Kronstad J.W."/>
            <person name="Gold S.E."/>
            <person name="Mueller O."/>
            <person name="Perlin M.H."/>
            <person name="Woesten H.A.B."/>
            <person name="de Vries R."/>
            <person name="Ruiz-Herrera J."/>
            <person name="Reynaga-Pena C.G."/>
            <person name="Snetselaar K."/>
            <person name="McCann M."/>
            <person name="Perez-Martin J."/>
            <person name="Feldbruegge M."/>
            <person name="Basse C.W."/>
            <person name="Steinberg G."/>
            <person name="Ibeas J.I."/>
            <person name="Holloman W."/>
            <person name="Guzman P."/>
            <person name="Farman M.L."/>
            <person name="Stajich J.E."/>
            <person name="Sentandreu R."/>
            <person name="Gonzalez-Prieto J.M."/>
            <person name="Kennell J.C."/>
            <person name="Molina L."/>
            <person name="Schirawski J."/>
            <person name="Mendoza-Mendoza A."/>
            <person name="Greilinger D."/>
            <person name="Muench K."/>
            <person name="Roessel N."/>
            <person name="Scherer M."/>
            <person name="Vranes M."/>
            <person name="Ladendorf O."/>
            <person name="Vincon V."/>
            <person name="Fuchs U."/>
            <person name="Sandrock B."/>
            <person name="Meng S."/>
            <person name="Ho E.C.H."/>
            <person name="Cahill M.J."/>
            <person name="Boyce K.J."/>
            <person name="Klose J."/>
            <person name="Klosterman S.J."/>
            <person name="Deelstra H.J."/>
            <person name="Ortiz-Castellanos L."/>
            <person name="Li W."/>
            <person name="Sanchez-Alonso P."/>
            <person name="Schreier P.H."/>
            <person name="Haeuser-Hahn I."/>
            <person name="Vaupel M."/>
            <person name="Koopmann E."/>
            <person name="Friedrich G."/>
            <person name="Voss H."/>
            <person name="Schlueter T."/>
            <person name="Margolis J."/>
            <person name="Platt D."/>
            <person name="Swimmer C."/>
            <person name="Gnirke A."/>
            <person name="Chen F."/>
            <person name="Vysotskaia V."/>
            <person name="Mannhaupt G."/>
            <person name="Gueldener U."/>
            <person name="Muensterkoetter M."/>
            <person name="Haase D."/>
            <person name="Oesterheld M."/>
            <person name="Mewes H.-W."/>
            <person name="Mauceli E.W."/>
            <person name="DeCaprio D."/>
            <person name="Wade C.M."/>
            <person name="Butler J."/>
            <person name="Young S.K."/>
            <person name="Jaffe D.B."/>
            <person name="Calvo S.E."/>
            <person name="Nusbaum C."/>
            <person name="Galagan J.E."/>
            <person name="Birren B.W."/>
        </authorList>
    </citation>
    <scope>NUCLEOTIDE SEQUENCE [LARGE SCALE GENOMIC DNA]</scope>
    <source>
        <strain>DSM 14603 / FGSC 9021 / UM521</strain>
    </source>
</reference>
<reference key="3">
    <citation type="submission" date="2014-09" db="EMBL/GenBank/DDBJ databases">
        <authorList>
            <person name="Gueldener U."/>
            <person name="Muensterkoetter M."/>
            <person name="Walter M.C."/>
            <person name="Mannhaupt G."/>
            <person name="Kahmann R."/>
        </authorList>
    </citation>
    <scope>GENOME REANNOTATION</scope>
    <source>
        <strain>DSM 14603 / FGSC 9021 / UM521</strain>
    </source>
</reference>
<dbReference type="EC" id="2.5.1.21"/>
<dbReference type="EMBL" id="X99718">
    <property type="protein sequence ID" value="CAA68054.1"/>
    <property type="molecule type" value="Genomic_DNA"/>
</dbReference>
<dbReference type="EMBL" id="CM003153">
    <property type="protein sequence ID" value="KIS67272.1"/>
    <property type="molecule type" value="Genomic_DNA"/>
</dbReference>
<dbReference type="RefSeq" id="XP_011391077.1">
    <property type="nucleotide sequence ID" value="XM_011392775.1"/>
</dbReference>
<dbReference type="SMR" id="Q92459"/>
<dbReference type="FunCoup" id="Q92459">
    <property type="interactions" value="205"/>
</dbReference>
<dbReference type="STRING" id="237631.Q92459"/>
<dbReference type="EnsemblFungi" id="KIS67272">
    <property type="protein sequence ID" value="KIS67272"/>
    <property type="gene ID" value="UMAG_04374"/>
</dbReference>
<dbReference type="GeneID" id="23564576"/>
<dbReference type="KEGG" id="uma:UMAG_04374"/>
<dbReference type="VEuPathDB" id="FungiDB:UMAG_04374"/>
<dbReference type="eggNOG" id="KOG1459">
    <property type="taxonomic scope" value="Eukaryota"/>
</dbReference>
<dbReference type="HOGENOM" id="CLU_031981_2_2_1"/>
<dbReference type="InParanoid" id="Q92459"/>
<dbReference type="OMA" id="DYAEDCE"/>
<dbReference type="OrthoDB" id="431150at2759"/>
<dbReference type="UniPathway" id="UPA00767">
    <property type="reaction ID" value="UER00751"/>
</dbReference>
<dbReference type="Proteomes" id="UP000000561">
    <property type="component" value="Chromosome 14"/>
</dbReference>
<dbReference type="GO" id="GO:0005789">
    <property type="term" value="C:endoplasmic reticulum membrane"/>
    <property type="evidence" value="ECO:0000318"/>
    <property type="project" value="GO_Central"/>
</dbReference>
<dbReference type="GO" id="GO:0051996">
    <property type="term" value="F:squalene synthase [NAD(P)H] activity"/>
    <property type="evidence" value="ECO:0000318"/>
    <property type="project" value="GO_Central"/>
</dbReference>
<dbReference type="GO" id="GO:0006696">
    <property type="term" value="P:ergosterol biosynthetic process"/>
    <property type="evidence" value="ECO:0000318"/>
    <property type="project" value="GO_Central"/>
</dbReference>
<dbReference type="GO" id="GO:0045338">
    <property type="term" value="P:farnesyl diphosphate metabolic process"/>
    <property type="evidence" value="ECO:0000318"/>
    <property type="project" value="GO_Central"/>
</dbReference>
<dbReference type="GO" id="GO:0008299">
    <property type="term" value="P:isoprenoid biosynthetic process"/>
    <property type="evidence" value="ECO:0007669"/>
    <property type="project" value="UniProtKB-KW"/>
</dbReference>
<dbReference type="CDD" id="cd00683">
    <property type="entry name" value="Trans_IPPS_HH"/>
    <property type="match status" value="1"/>
</dbReference>
<dbReference type="FunFam" id="1.10.600.10:FF:000034">
    <property type="entry name" value="Farnesyl-diphosphate farnesyltransferase"/>
    <property type="match status" value="1"/>
</dbReference>
<dbReference type="Gene3D" id="1.10.600.10">
    <property type="entry name" value="Farnesyl Diphosphate Synthase"/>
    <property type="match status" value="1"/>
</dbReference>
<dbReference type="InterPro" id="IPR008949">
    <property type="entry name" value="Isoprenoid_synthase_dom_sf"/>
</dbReference>
<dbReference type="InterPro" id="IPR002060">
    <property type="entry name" value="Squ/phyt_synthse"/>
</dbReference>
<dbReference type="InterPro" id="IPR006449">
    <property type="entry name" value="Squal_synth-like"/>
</dbReference>
<dbReference type="InterPro" id="IPR019845">
    <property type="entry name" value="Squalene/phytoene_synthase_CS"/>
</dbReference>
<dbReference type="InterPro" id="IPR044844">
    <property type="entry name" value="Trans_IPPS_euk-type"/>
</dbReference>
<dbReference type="InterPro" id="IPR033904">
    <property type="entry name" value="Trans_IPPS_HH"/>
</dbReference>
<dbReference type="NCBIfam" id="TIGR01559">
    <property type="entry name" value="squal_synth"/>
    <property type="match status" value="1"/>
</dbReference>
<dbReference type="PANTHER" id="PTHR11626">
    <property type="entry name" value="FARNESYL-DIPHOSPHATE FARNESYLTRANSFERASE"/>
    <property type="match status" value="1"/>
</dbReference>
<dbReference type="PANTHER" id="PTHR11626:SF2">
    <property type="entry name" value="SQUALENE SYNTHASE"/>
    <property type="match status" value="1"/>
</dbReference>
<dbReference type="Pfam" id="PF00494">
    <property type="entry name" value="SQS_PSY"/>
    <property type="match status" value="1"/>
</dbReference>
<dbReference type="SFLD" id="SFLDS00005">
    <property type="entry name" value="Isoprenoid_Synthase_Type_I"/>
    <property type="match status" value="1"/>
</dbReference>
<dbReference type="SFLD" id="SFLDG01018">
    <property type="entry name" value="Squalene/Phytoene_Synthase_Lik"/>
    <property type="match status" value="1"/>
</dbReference>
<dbReference type="SUPFAM" id="SSF48576">
    <property type="entry name" value="Terpenoid synthases"/>
    <property type="match status" value="1"/>
</dbReference>
<dbReference type="PROSITE" id="PS01044">
    <property type="entry name" value="SQUALEN_PHYTOEN_SYN_1"/>
    <property type="match status" value="1"/>
</dbReference>
<dbReference type="PROSITE" id="PS01045">
    <property type="entry name" value="SQUALEN_PHYTOEN_SYN_2"/>
    <property type="match status" value="1"/>
</dbReference>
<comment type="function">
    <text evidence="1">Catalyzes the condensation of 2 two farnesyl pyrophosphate moieties to form squalene. It is the first committed enzyme of the sterol biosynthesis pathway. Required for the biosynthesis of ergosterol (By similarity).</text>
</comment>
<comment type="catalytic activity">
    <reaction>
        <text>2 (2E,6E)-farnesyl diphosphate + NADPH + H(+) = squalene + 2 diphosphate + NADP(+)</text>
        <dbReference type="Rhea" id="RHEA:32295"/>
        <dbReference type="ChEBI" id="CHEBI:15378"/>
        <dbReference type="ChEBI" id="CHEBI:15440"/>
        <dbReference type="ChEBI" id="CHEBI:33019"/>
        <dbReference type="ChEBI" id="CHEBI:57783"/>
        <dbReference type="ChEBI" id="CHEBI:58349"/>
        <dbReference type="ChEBI" id="CHEBI:175763"/>
        <dbReference type="EC" id="2.5.1.21"/>
    </reaction>
</comment>
<comment type="catalytic activity">
    <reaction>
        <text>2 (2E,6E)-farnesyl diphosphate + NADH + H(+) = squalene + 2 diphosphate + NAD(+)</text>
        <dbReference type="Rhea" id="RHEA:32299"/>
        <dbReference type="ChEBI" id="CHEBI:15378"/>
        <dbReference type="ChEBI" id="CHEBI:15440"/>
        <dbReference type="ChEBI" id="CHEBI:33019"/>
        <dbReference type="ChEBI" id="CHEBI:57540"/>
        <dbReference type="ChEBI" id="CHEBI:57945"/>
        <dbReference type="ChEBI" id="CHEBI:175763"/>
        <dbReference type="EC" id="2.5.1.21"/>
    </reaction>
</comment>
<comment type="cofactor">
    <cofactor evidence="1">
        <name>Mg(2+)</name>
        <dbReference type="ChEBI" id="CHEBI:18420"/>
    </cofactor>
</comment>
<comment type="pathway">
    <text>Terpene metabolism; lanosterol biosynthesis; lanosterol from farnesyl diphosphate: step 1/3.</text>
</comment>
<comment type="subunit">
    <text evidence="1">Monomer.</text>
</comment>
<comment type="subcellular location">
    <subcellularLocation>
        <location evidence="1">Endoplasmic reticulum membrane</location>
        <topology evidence="1">Multi-pass membrane protein</topology>
    </subcellularLocation>
</comment>
<comment type="similarity">
    <text evidence="3">Belongs to the phytoene/squalene synthase family.</text>
</comment>
<protein>
    <recommendedName>
        <fullName>Squalene synthase</fullName>
        <shortName>SQS</shortName>
        <shortName>SS</shortName>
        <ecNumber>2.5.1.21</ecNumber>
    </recommendedName>
    <alternativeName>
        <fullName>FPP:FPP farnesyltransferase</fullName>
    </alternativeName>
    <alternativeName>
        <fullName>Farnesyl-diphosphate farnesyltransferase</fullName>
    </alternativeName>
</protein>
<keyword id="KW-0256">Endoplasmic reticulum</keyword>
<keyword id="KW-0414">Isoprene biosynthesis</keyword>
<keyword id="KW-0444">Lipid biosynthesis</keyword>
<keyword id="KW-0443">Lipid metabolism</keyword>
<keyword id="KW-0460">Magnesium</keyword>
<keyword id="KW-0472">Membrane</keyword>
<keyword id="KW-0511">Multifunctional enzyme</keyword>
<keyword id="KW-0521">NADP</keyword>
<keyword id="KW-1185">Reference proteome</keyword>
<keyword id="KW-0752">Steroid biosynthesis</keyword>
<keyword id="KW-0753">Steroid metabolism</keyword>
<keyword id="KW-0756">Sterol biosynthesis</keyword>
<keyword id="KW-1207">Sterol metabolism</keyword>
<keyword id="KW-0808">Transferase</keyword>
<keyword id="KW-0812">Transmembrane</keyword>
<keyword id="KW-1133">Transmembrane helix</keyword>
<accession>Q92459</accession>
<accession>A0A0D1BZY0</accession>
<accession>Q4P689</accession>
<organism>
    <name type="scientific">Mycosarcoma maydis</name>
    <name type="common">Corn smut fungus</name>
    <name type="synonym">Ustilago maydis</name>
    <dbReference type="NCBI Taxonomy" id="5270"/>
    <lineage>
        <taxon>Eukaryota</taxon>
        <taxon>Fungi</taxon>
        <taxon>Dikarya</taxon>
        <taxon>Basidiomycota</taxon>
        <taxon>Ustilaginomycotina</taxon>
        <taxon>Ustilaginomycetes</taxon>
        <taxon>Ustilaginales</taxon>
        <taxon>Ustilaginaceae</taxon>
        <taxon>Mycosarcoma</taxon>
    </lineage>
</organism>
<feature type="chain" id="PRO_0000067452" description="Squalene synthase">
    <location>
        <begin position="1"/>
        <end position="572"/>
    </location>
</feature>
<feature type="transmembrane region" description="Helical" evidence="2">
    <location>
        <begin position="316"/>
        <end position="336"/>
    </location>
</feature>
<feature type="transmembrane region" description="Helical" evidence="2">
    <location>
        <begin position="492"/>
        <end position="512"/>
    </location>
</feature>
<feature type="sequence conflict" description="In Ref. 1; CAA68054." evidence="3" ref="1">
    <original>EL</original>
    <variation>DV</variation>
    <location>
        <begin position="71"/>
        <end position="72"/>
    </location>
</feature>
<feature type="sequence conflict" description="In Ref. 1; CAA68054." evidence="3" ref="1">
    <original>S</original>
    <variation>T</variation>
    <location>
        <position position="428"/>
    </location>
</feature>
<sequence>MGLLSYILLGFTHPSELRAMIGYKVWRDPLNDIKANPQASGWDRQRMRDCWGFLDLTSRSFAAVIKELKGELSRVICLFYLVLRALDTVEDDMTIPAQRKIPLLVNFYKYLEQPGWNFTESGPNEKDRQLLVEFDKVIAEYQLLDVGYKTVISDITAKMGAGMASYIELSAKGPLKVAMWKHFDLYCHFVAGLVGEGLSRLFSESKLERPWLGHQLELSNHMGLFLQKTNIIRDYAEDCEEGRYFWPQQCWGDDFAKFESQPDVAKGIIEIKPGHFRPADNELGQRSMYVLSSMLLDAMSHATHALDYLALLKEQSVFNFCAIPQVMAIATLELMFNNPDVFKKNVKIRKGVAVGLILRAVNPRDVAYTFLHYSRKMHARLSPADPNFTRWSVELARIEQWCETYYPSFIAAASEGKPTDIRANALRSWSESRRTQALILKQAKLNGSDASTLDAKSVLEAAQNSALDPRDLMTEDERAAQDKRDRDQMVKFFLIILVGMVTFMGIVALITWEIVWWWTMDTPDPLSVYVKHAYYLVKTQGWSTVKEVLRTTRLSFEHVWKHGLTSPPKLEL</sequence>
<proteinExistence type="inferred from homology"/>
<evidence type="ECO:0000250" key="1"/>
<evidence type="ECO:0000255" key="2"/>
<evidence type="ECO:0000305" key="3"/>